<sequence length="300" mass="33730">MTAFGVEPYGQPKYLEIAGKRMAYIDEGKGDAIVFQHGNPTSSYLWRNIMPHLEGLGRLVACDLIGMGASDKLSPSGPDRYSYGEQRDFLFALWDTLDLGDHVVLVLHDWGSALGFDWANQHRDRVQGIAFMEAIVTPMTWADWPPAVRGVFQGFRSPQGEPMALEHNIFVERVLPGAILRQLSDEEMNHYRRPFVNGGEDRRPTLSWPRNLPIDGEPAEVVALVNEYRSWLEETDMPKLFINAEPGAIITGRIRDYVRSWPNQTEITVPGVHFVQEDSPEEIGAAIAQFVRQLRSAAGV</sequence>
<organism>
    <name type="scientific">Mycobacterium bovis (strain ATCC BAA-935 / AF2122/97)</name>
    <dbReference type="NCBI Taxonomy" id="233413"/>
    <lineage>
        <taxon>Bacteria</taxon>
        <taxon>Bacillati</taxon>
        <taxon>Actinomycetota</taxon>
        <taxon>Actinomycetes</taxon>
        <taxon>Mycobacteriales</taxon>
        <taxon>Mycobacteriaceae</taxon>
        <taxon>Mycobacterium</taxon>
        <taxon>Mycobacterium tuberculosis complex</taxon>
    </lineage>
</organism>
<comment type="function">
    <text evidence="2">Catalyzes hydrolytic cleavage of carbon-halogen bonds in halogenated aliphatic compounds, leading to the formation of the corresponding primary alcohols, halide ions and protons.</text>
</comment>
<comment type="catalytic activity">
    <reaction evidence="2">
        <text>1-haloalkane + H2O = a halide anion + a primary alcohol + H(+)</text>
        <dbReference type="Rhea" id="RHEA:19081"/>
        <dbReference type="ChEBI" id="CHEBI:15377"/>
        <dbReference type="ChEBI" id="CHEBI:15378"/>
        <dbReference type="ChEBI" id="CHEBI:15734"/>
        <dbReference type="ChEBI" id="CHEBI:16042"/>
        <dbReference type="ChEBI" id="CHEBI:18060"/>
        <dbReference type="EC" id="3.8.1.5"/>
    </reaction>
</comment>
<comment type="subunit">
    <text evidence="2">Monomer.</text>
</comment>
<comment type="similarity">
    <text evidence="2">Belongs to the haloalkane dehalogenase family. Type 2 subfamily.</text>
</comment>
<feature type="chain" id="PRO_0000216781" description="Haloalkane dehalogenase">
    <location>
        <begin position="1"/>
        <end position="300"/>
    </location>
</feature>
<feature type="domain" description="AB hydrolase-1" evidence="1">
    <location>
        <begin position="32"/>
        <end position="155"/>
    </location>
</feature>
<feature type="active site" description="Nucleophile" evidence="2">
    <location>
        <position position="109"/>
    </location>
</feature>
<feature type="active site" description="Proton donor" evidence="2">
    <location>
        <position position="133"/>
    </location>
</feature>
<feature type="active site" description="Proton acceptor" evidence="2">
    <location>
        <position position="273"/>
    </location>
</feature>
<feature type="sequence conflict" description="In Ref. 1; CAB45532/CAH04659." evidence="3" ref="1">
    <original>T</original>
    <variation>A</variation>
    <location>
        <position position="96"/>
    </location>
</feature>
<name>DHAA_MYCBO</name>
<dbReference type="EC" id="3.8.1.5" evidence="2"/>
<dbReference type="EMBL" id="AJ243259">
    <property type="protein sequence ID" value="CAB45532.2"/>
    <property type="molecule type" value="Genomic_DNA"/>
</dbReference>
<dbReference type="EMBL" id="AJ784272">
    <property type="protein sequence ID" value="CAH04659.1"/>
    <property type="molecule type" value="Genomic_DNA"/>
</dbReference>
<dbReference type="EMBL" id="LT708304">
    <property type="protein sequence ID" value="SIU01228.1"/>
    <property type="molecule type" value="Genomic_DNA"/>
</dbReference>
<dbReference type="RefSeq" id="NP_856256.1">
    <property type="nucleotide sequence ID" value="NC_002945.3"/>
</dbReference>
<dbReference type="RefSeq" id="WP_010950743.1">
    <property type="nucleotide sequence ID" value="NC_002945.4"/>
</dbReference>
<dbReference type="SMR" id="Q9XB14"/>
<dbReference type="ESTHER" id="myctu-linb">
    <property type="family name" value="Haloalkane_dehalogenase-HLD2"/>
</dbReference>
<dbReference type="KEGG" id="mbo:BQ2027_MB2610"/>
<dbReference type="PATRIC" id="fig|233413.5.peg.2871"/>
<dbReference type="BRENDA" id="3.8.1.5">
    <property type="organism ID" value="3494"/>
</dbReference>
<dbReference type="Proteomes" id="UP000001419">
    <property type="component" value="Chromosome"/>
</dbReference>
<dbReference type="GO" id="GO:0018786">
    <property type="term" value="F:haloalkane dehalogenase activity"/>
    <property type="evidence" value="ECO:0007669"/>
    <property type="project" value="UniProtKB-UniRule"/>
</dbReference>
<dbReference type="Gene3D" id="3.40.50.1820">
    <property type="entry name" value="alpha/beta hydrolase"/>
    <property type="match status" value="1"/>
</dbReference>
<dbReference type="HAMAP" id="MF_01231">
    <property type="entry name" value="Haloalk_dehal_type2"/>
    <property type="match status" value="1"/>
</dbReference>
<dbReference type="InterPro" id="IPR000073">
    <property type="entry name" value="AB_hydrolase_1"/>
</dbReference>
<dbReference type="InterPro" id="IPR029058">
    <property type="entry name" value="AB_hydrolase_fold"/>
</dbReference>
<dbReference type="InterPro" id="IPR000639">
    <property type="entry name" value="Epox_hydrolase-like"/>
</dbReference>
<dbReference type="InterPro" id="IPR023594">
    <property type="entry name" value="Haloalkane_dehalogenase_2"/>
</dbReference>
<dbReference type="NCBIfam" id="NF002938">
    <property type="entry name" value="PRK03592.1"/>
    <property type="match status" value="1"/>
</dbReference>
<dbReference type="PANTHER" id="PTHR43329">
    <property type="entry name" value="EPOXIDE HYDROLASE"/>
    <property type="match status" value="1"/>
</dbReference>
<dbReference type="Pfam" id="PF00561">
    <property type="entry name" value="Abhydrolase_1"/>
    <property type="match status" value="1"/>
</dbReference>
<dbReference type="PRINTS" id="PR00412">
    <property type="entry name" value="EPOXHYDRLASE"/>
</dbReference>
<dbReference type="SUPFAM" id="SSF53474">
    <property type="entry name" value="alpha/beta-Hydrolases"/>
    <property type="match status" value="1"/>
</dbReference>
<accession>Q9XB14</accession>
<accession>A0A1R3Y210</accession>
<accession>Q6EUU9</accession>
<accession>X2BL44</accession>
<gene>
    <name evidence="2" type="primary">dhaA</name>
    <name type="synonym">dmbA</name>
    <name type="ordered locus">BQ2027_MB2610</name>
</gene>
<evidence type="ECO:0000255" key="1"/>
<evidence type="ECO:0000255" key="2">
    <source>
        <dbReference type="HAMAP-Rule" id="MF_01231"/>
    </source>
</evidence>
<evidence type="ECO:0000305" key="3"/>
<proteinExistence type="inferred from homology"/>
<keyword id="KW-0378">Hydrolase</keyword>
<keyword id="KW-1185">Reference proteome</keyword>
<reference key="1">
    <citation type="submission" date="2004-07" db="EMBL/GenBank/DDBJ databases">
        <title>Mycobacterial haloalkane dehalogenases: cloning, biochemical properties and distribution.</title>
        <authorList>
            <person name="Jesenska A."/>
            <person name="Strouhal M."/>
            <person name="Pavlova M."/>
            <person name="Tesinska I."/>
            <person name="Monincova M."/>
            <person name="Bartos M."/>
            <person name="Pavlik I."/>
            <person name="Rychlik I."/>
            <person name="Nagata Y."/>
            <person name="Damborsky J."/>
        </authorList>
    </citation>
    <scope>NUCLEOTIDE SEQUENCE [GENOMIC DNA]</scope>
    <source>
        <strain>5033/66</strain>
        <strain>MU11</strain>
    </source>
</reference>
<reference key="2">
    <citation type="journal article" date="2003" name="Proc. Natl. Acad. Sci. U.S.A.">
        <title>The complete genome sequence of Mycobacterium bovis.</title>
        <authorList>
            <person name="Garnier T."/>
            <person name="Eiglmeier K."/>
            <person name="Camus J.-C."/>
            <person name="Medina N."/>
            <person name="Mansoor H."/>
            <person name="Pryor M."/>
            <person name="Duthoy S."/>
            <person name="Grondin S."/>
            <person name="Lacroix C."/>
            <person name="Monsempe C."/>
            <person name="Simon S."/>
            <person name="Harris B."/>
            <person name="Atkin R."/>
            <person name="Doggett J."/>
            <person name="Mayes R."/>
            <person name="Keating L."/>
            <person name="Wheeler P.R."/>
            <person name="Parkhill J."/>
            <person name="Barrell B.G."/>
            <person name="Cole S.T."/>
            <person name="Gordon S.V."/>
            <person name="Hewinson R.G."/>
        </authorList>
    </citation>
    <scope>NUCLEOTIDE SEQUENCE [LARGE SCALE GENOMIC DNA]</scope>
    <source>
        <strain>ATCC BAA-935 / AF2122/97</strain>
    </source>
</reference>
<reference key="3">
    <citation type="journal article" date="2017" name="Genome Announc.">
        <title>Updated reference genome sequence and annotation of Mycobacterium bovis AF2122/97.</title>
        <authorList>
            <person name="Malone K.M."/>
            <person name="Farrell D."/>
            <person name="Stuber T.P."/>
            <person name="Schubert O.T."/>
            <person name="Aebersold R."/>
            <person name="Robbe-Austerman S."/>
            <person name="Gordon S.V."/>
        </authorList>
    </citation>
    <scope>NUCLEOTIDE SEQUENCE [LARGE SCALE GENOMIC DNA]</scope>
    <scope>GENOME REANNOTATION</scope>
    <source>
        <strain>ATCC BAA-935 / AF2122/97</strain>
    </source>
</reference>
<protein>
    <recommendedName>
        <fullName evidence="2">Haloalkane dehalogenase</fullName>
        <ecNumber evidence="2">3.8.1.5</ecNumber>
    </recommendedName>
</protein>